<organism>
    <name type="scientific">Mycoplasma pneumoniae (strain ATCC 29342 / M129 / Subtype 1)</name>
    <name type="common">Mycoplasmoides pneumoniae</name>
    <dbReference type="NCBI Taxonomy" id="272634"/>
    <lineage>
        <taxon>Bacteria</taxon>
        <taxon>Bacillati</taxon>
        <taxon>Mycoplasmatota</taxon>
        <taxon>Mycoplasmoidales</taxon>
        <taxon>Mycoplasmoidaceae</taxon>
        <taxon>Mycoplasmoides</taxon>
    </lineage>
</organism>
<sequence length="805" mass="91714">MLISKKTLAVLIPEITHVSNNEICEKLQQIGIEVEAIRAFKNPDYLQLGILRAVTPHPHDNHLYVCQVQIDKNKQLNVVTGAVNIVDPNNLNKHVIVAKKGAELLNGLIIKTKNIKGIISDGMLCSYVDINPFSKHLIADGDDTHAIVLDNINRDEFGDYLSFLNLDDVVFEVTLPTNRSDLQSLIFLAKELAAVLKRPVFLEQKTTMTLREFYRFPLNLRNRAQANFFGGLFLRDVAITSSPWTTKGLLINQELRPVNCFVDQANMVTVYTGQPIHCHDADKIHGSVELKLATQLETMLALDNKEYEIKPGDLVVADEQGTIAIVGIIGSKRTMVDNTTNNIFFEVVNYNHERIKQTAQRLGVANFASRLMSKPISLQATENCLNYLQNNFLNPESIGKISKFSSTIKAPAFNRKIYLNFNQLRELIGVTKKQLNDHMIRNYLTSLGFKMENQIARAPAYRQDITVWQDISEELLKILDLNKIKEDEILSSTKLEKHEKLNAYDALQKLRTKLQTLGFHNVITYQLISPERARNFNLFGLSNLWEIKNPLSNERSVLRVGLIDSLLRVIQKNAAYKNKLGNIFEFSFVKTKDSNQLHIAALWLEKMFGSTYQKDQGVSVDIPAMKGLAQLIISNFGFNCDFEPITEGEYFTKNVGLKLVVFNEQIGYVGLIKDELLAPYDLKGRPVYGLEINLDRLLNSLNRLERSYTPISKLQDVFKDITFSFPRDESHFETFVKAIKKLQTIFKWELISVFDTEKDGVPITKYTVRYYLKNFTNTPLTLEQIKAVETQLKQQCELAKIALDL</sequence>
<comment type="catalytic activity">
    <reaction>
        <text>tRNA(Phe) + L-phenylalanine + ATP = L-phenylalanyl-tRNA(Phe) + AMP + diphosphate + H(+)</text>
        <dbReference type="Rhea" id="RHEA:19413"/>
        <dbReference type="Rhea" id="RHEA-COMP:9668"/>
        <dbReference type="Rhea" id="RHEA-COMP:9699"/>
        <dbReference type="ChEBI" id="CHEBI:15378"/>
        <dbReference type="ChEBI" id="CHEBI:30616"/>
        <dbReference type="ChEBI" id="CHEBI:33019"/>
        <dbReference type="ChEBI" id="CHEBI:58095"/>
        <dbReference type="ChEBI" id="CHEBI:78442"/>
        <dbReference type="ChEBI" id="CHEBI:78531"/>
        <dbReference type="ChEBI" id="CHEBI:456215"/>
        <dbReference type="EC" id="6.1.1.20"/>
    </reaction>
</comment>
<comment type="cofactor">
    <cofactor evidence="1">
        <name>Mg(2+)</name>
        <dbReference type="ChEBI" id="CHEBI:18420"/>
    </cofactor>
    <text evidence="1">Binds 2 magnesium ions per tetramer.</text>
</comment>
<comment type="subunit">
    <text evidence="1">Tetramer of two alpha and two beta subunits.</text>
</comment>
<comment type="subcellular location">
    <subcellularLocation>
        <location evidence="1">Cytoplasm</location>
    </subcellularLocation>
</comment>
<comment type="similarity">
    <text evidence="2">Belongs to the phenylalanyl-tRNA synthetase beta subunit family. Type 1 subfamily.</text>
</comment>
<feature type="chain" id="PRO_0000126915" description="Phenylalanine--tRNA ligase beta subunit">
    <location>
        <begin position="1"/>
        <end position="805"/>
    </location>
</feature>
<feature type="domain" description="tRNA-binding">
    <location>
        <begin position="40"/>
        <end position="162"/>
    </location>
</feature>
<feature type="domain" description="B5">
    <location>
        <begin position="412"/>
        <end position="486"/>
    </location>
</feature>
<feature type="binding site" evidence="1">
    <location>
        <position position="464"/>
    </location>
    <ligand>
        <name>Mg(2+)</name>
        <dbReference type="ChEBI" id="CHEBI:18420"/>
        <note>shared with alpha subunit</note>
    </ligand>
</feature>
<feature type="binding site" evidence="1">
    <location>
        <position position="470"/>
    </location>
    <ligand>
        <name>Mg(2+)</name>
        <dbReference type="ChEBI" id="CHEBI:18420"/>
        <note>shared with alpha subunit</note>
    </ligand>
</feature>
<feature type="binding site" evidence="1">
    <location>
        <position position="473"/>
    </location>
    <ligand>
        <name>Mg(2+)</name>
        <dbReference type="ChEBI" id="CHEBI:18420"/>
        <note>shared with alpha subunit</note>
    </ligand>
</feature>
<feature type="binding site" evidence="1">
    <location>
        <position position="474"/>
    </location>
    <ligand>
        <name>Mg(2+)</name>
        <dbReference type="ChEBI" id="CHEBI:18420"/>
        <note>shared with alpha subunit</note>
    </ligand>
</feature>
<keyword id="KW-0030">Aminoacyl-tRNA synthetase</keyword>
<keyword id="KW-0067">ATP-binding</keyword>
<keyword id="KW-0963">Cytoplasm</keyword>
<keyword id="KW-0436">Ligase</keyword>
<keyword id="KW-0460">Magnesium</keyword>
<keyword id="KW-0479">Metal-binding</keyword>
<keyword id="KW-0547">Nucleotide-binding</keyword>
<keyword id="KW-0648">Protein biosynthesis</keyword>
<keyword id="KW-1185">Reference proteome</keyword>
<keyword id="KW-0694">RNA-binding</keyword>
<keyword id="KW-0820">tRNA-binding</keyword>
<dbReference type="EC" id="6.1.1.20"/>
<dbReference type="EMBL" id="U00089">
    <property type="protein sequence ID" value="AAB95696.1"/>
    <property type="molecule type" value="Genomic_DNA"/>
</dbReference>
<dbReference type="PIR" id="S73374">
    <property type="entry name" value="S73374"/>
</dbReference>
<dbReference type="RefSeq" id="NP_109794.1">
    <property type="nucleotide sequence ID" value="NC_000912.1"/>
</dbReference>
<dbReference type="RefSeq" id="WP_010874463.1">
    <property type="nucleotide sequence ID" value="NZ_OU342337.1"/>
</dbReference>
<dbReference type="SMR" id="P75563"/>
<dbReference type="IntAct" id="P75563">
    <property type="interactions" value="6"/>
</dbReference>
<dbReference type="STRING" id="272634.MPN_106"/>
<dbReference type="EnsemblBacteria" id="AAB95696">
    <property type="protein sequence ID" value="AAB95696"/>
    <property type="gene ID" value="MPN_106"/>
</dbReference>
<dbReference type="KEGG" id="mpn:MPN_106"/>
<dbReference type="PATRIC" id="fig|272634.6.peg.112"/>
<dbReference type="HOGENOM" id="CLU_016891_2_0_14"/>
<dbReference type="OrthoDB" id="9805455at2"/>
<dbReference type="BioCyc" id="MPNE272634:G1GJ3-182-MONOMER"/>
<dbReference type="Proteomes" id="UP000000808">
    <property type="component" value="Chromosome"/>
</dbReference>
<dbReference type="GO" id="GO:0009328">
    <property type="term" value="C:phenylalanine-tRNA ligase complex"/>
    <property type="evidence" value="ECO:0007669"/>
    <property type="project" value="TreeGrafter"/>
</dbReference>
<dbReference type="GO" id="GO:0005524">
    <property type="term" value="F:ATP binding"/>
    <property type="evidence" value="ECO:0007669"/>
    <property type="project" value="UniProtKB-UniRule"/>
</dbReference>
<dbReference type="GO" id="GO:0000287">
    <property type="term" value="F:magnesium ion binding"/>
    <property type="evidence" value="ECO:0007669"/>
    <property type="project" value="UniProtKB-UniRule"/>
</dbReference>
<dbReference type="GO" id="GO:0004826">
    <property type="term" value="F:phenylalanine-tRNA ligase activity"/>
    <property type="evidence" value="ECO:0007669"/>
    <property type="project" value="UniProtKB-UniRule"/>
</dbReference>
<dbReference type="GO" id="GO:0000049">
    <property type="term" value="F:tRNA binding"/>
    <property type="evidence" value="ECO:0007669"/>
    <property type="project" value="UniProtKB-KW"/>
</dbReference>
<dbReference type="GO" id="GO:0006432">
    <property type="term" value="P:phenylalanyl-tRNA aminoacylation"/>
    <property type="evidence" value="ECO:0007669"/>
    <property type="project" value="UniProtKB-UniRule"/>
</dbReference>
<dbReference type="CDD" id="cd00769">
    <property type="entry name" value="PheRS_beta_core"/>
    <property type="match status" value="1"/>
</dbReference>
<dbReference type="CDD" id="cd02796">
    <property type="entry name" value="tRNA_bind_bactPheRS"/>
    <property type="match status" value="1"/>
</dbReference>
<dbReference type="Gene3D" id="3.30.56.10">
    <property type="match status" value="2"/>
</dbReference>
<dbReference type="Gene3D" id="3.30.930.10">
    <property type="entry name" value="Bira Bifunctional Protein, Domain 2"/>
    <property type="match status" value="1"/>
</dbReference>
<dbReference type="Gene3D" id="2.40.50.140">
    <property type="entry name" value="Nucleic acid-binding proteins"/>
    <property type="match status" value="1"/>
</dbReference>
<dbReference type="Gene3D" id="3.50.40.10">
    <property type="entry name" value="Phenylalanyl-trna Synthetase, Chain B, domain 3"/>
    <property type="match status" value="1"/>
</dbReference>
<dbReference type="HAMAP" id="MF_00283">
    <property type="entry name" value="Phe_tRNA_synth_beta1"/>
    <property type="match status" value="1"/>
</dbReference>
<dbReference type="InterPro" id="IPR045864">
    <property type="entry name" value="aa-tRNA-synth_II/BPL/LPL"/>
</dbReference>
<dbReference type="InterPro" id="IPR005146">
    <property type="entry name" value="B3/B4_tRNA-bd"/>
</dbReference>
<dbReference type="InterPro" id="IPR009061">
    <property type="entry name" value="DNA-bd_dom_put_sf"/>
</dbReference>
<dbReference type="InterPro" id="IPR012340">
    <property type="entry name" value="NA-bd_OB-fold"/>
</dbReference>
<dbReference type="InterPro" id="IPR045060">
    <property type="entry name" value="Phe-tRNA-ligase_IIc_bsu"/>
</dbReference>
<dbReference type="InterPro" id="IPR004532">
    <property type="entry name" value="Phe-tRNA-ligase_IIc_bsu_bact"/>
</dbReference>
<dbReference type="InterPro" id="IPR020825">
    <property type="entry name" value="Phe-tRNA_synthase-like_B3/B4"/>
</dbReference>
<dbReference type="InterPro" id="IPR041616">
    <property type="entry name" value="PheRS_beta_core"/>
</dbReference>
<dbReference type="InterPro" id="IPR002547">
    <property type="entry name" value="tRNA-bd_dom"/>
</dbReference>
<dbReference type="InterPro" id="IPR033714">
    <property type="entry name" value="tRNA_bind_bactPheRS"/>
</dbReference>
<dbReference type="InterPro" id="IPR005147">
    <property type="entry name" value="tRNA_synthase_B5-dom"/>
</dbReference>
<dbReference type="NCBIfam" id="TIGR00472">
    <property type="entry name" value="pheT_bact"/>
    <property type="match status" value="1"/>
</dbReference>
<dbReference type="PANTHER" id="PTHR10947:SF0">
    <property type="entry name" value="PHENYLALANINE--TRNA LIGASE BETA SUBUNIT"/>
    <property type="match status" value="1"/>
</dbReference>
<dbReference type="PANTHER" id="PTHR10947">
    <property type="entry name" value="PHENYLALANYL-TRNA SYNTHETASE BETA CHAIN AND LEUCINE-RICH REPEAT-CONTAINING PROTEIN 47"/>
    <property type="match status" value="1"/>
</dbReference>
<dbReference type="Pfam" id="PF03483">
    <property type="entry name" value="B3_4"/>
    <property type="match status" value="1"/>
</dbReference>
<dbReference type="Pfam" id="PF01588">
    <property type="entry name" value="tRNA_bind"/>
    <property type="match status" value="1"/>
</dbReference>
<dbReference type="Pfam" id="PF17759">
    <property type="entry name" value="tRNA_synthFbeta"/>
    <property type="match status" value="1"/>
</dbReference>
<dbReference type="SMART" id="SM00873">
    <property type="entry name" value="B3_4"/>
    <property type="match status" value="1"/>
</dbReference>
<dbReference type="SMART" id="SM00874">
    <property type="entry name" value="B5"/>
    <property type="match status" value="1"/>
</dbReference>
<dbReference type="SUPFAM" id="SSF55681">
    <property type="entry name" value="Class II aaRS and biotin synthetases"/>
    <property type="match status" value="1"/>
</dbReference>
<dbReference type="SUPFAM" id="SSF50249">
    <property type="entry name" value="Nucleic acid-binding proteins"/>
    <property type="match status" value="1"/>
</dbReference>
<dbReference type="SUPFAM" id="SSF56037">
    <property type="entry name" value="PheT/TilS domain"/>
    <property type="match status" value="1"/>
</dbReference>
<dbReference type="SUPFAM" id="SSF46955">
    <property type="entry name" value="Putative DNA-binding domain"/>
    <property type="match status" value="1"/>
</dbReference>
<dbReference type="PROSITE" id="PS51483">
    <property type="entry name" value="B5"/>
    <property type="match status" value="1"/>
</dbReference>
<dbReference type="PROSITE" id="PS50886">
    <property type="entry name" value="TRBD"/>
    <property type="match status" value="1"/>
</dbReference>
<gene>
    <name type="primary">pheT</name>
    <name type="ordered locus">MPN_106</name>
    <name type="ORF">MP048</name>
</gene>
<protein>
    <recommendedName>
        <fullName>Phenylalanine--tRNA ligase beta subunit</fullName>
        <ecNumber>6.1.1.20</ecNumber>
    </recommendedName>
    <alternativeName>
        <fullName>Phenylalanyl-tRNA synthetase beta subunit</fullName>
        <shortName>PheRS</shortName>
    </alternativeName>
</protein>
<proteinExistence type="inferred from homology"/>
<accession>P75563</accession>
<evidence type="ECO:0000250" key="1"/>
<evidence type="ECO:0000305" key="2"/>
<reference key="1">
    <citation type="journal article" date="1996" name="Nucleic Acids Res.">
        <title>Complete sequence analysis of the genome of the bacterium Mycoplasma pneumoniae.</title>
        <authorList>
            <person name="Himmelreich R."/>
            <person name="Hilbert H."/>
            <person name="Plagens H."/>
            <person name="Pirkl E."/>
            <person name="Li B.-C."/>
            <person name="Herrmann R."/>
        </authorList>
    </citation>
    <scope>NUCLEOTIDE SEQUENCE [LARGE SCALE GENOMIC DNA]</scope>
    <source>
        <strain>ATCC 29342 / M129 / Subtype 1</strain>
    </source>
</reference>
<name>SYFB_MYCPN</name>